<comment type="function">
    <text evidence="1">Specifically methylates the N4 position of cytidine in position 1402 (C1402) of 16S rRNA.</text>
</comment>
<comment type="catalytic activity">
    <reaction evidence="1">
        <text>cytidine(1402) in 16S rRNA + S-adenosyl-L-methionine = N(4)-methylcytidine(1402) in 16S rRNA + S-adenosyl-L-homocysteine + H(+)</text>
        <dbReference type="Rhea" id="RHEA:42928"/>
        <dbReference type="Rhea" id="RHEA-COMP:10286"/>
        <dbReference type="Rhea" id="RHEA-COMP:10287"/>
        <dbReference type="ChEBI" id="CHEBI:15378"/>
        <dbReference type="ChEBI" id="CHEBI:57856"/>
        <dbReference type="ChEBI" id="CHEBI:59789"/>
        <dbReference type="ChEBI" id="CHEBI:74506"/>
        <dbReference type="ChEBI" id="CHEBI:82748"/>
        <dbReference type="EC" id="2.1.1.199"/>
    </reaction>
</comment>
<comment type="subcellular location">
    <subcellularLocation>
        <location evidence="1">Cytoplasm</location>
    </subcellularLocation>
</comment>
<comment type="similarity">
    <text evidence="1">Belongs to the methyltransferase superfamily. RsmH family.</text>
</comment>
<keyword id="KW-0963">Cytoplasm</keyword>
<keyword id="KW-0489">Methyltransferase</keyword>
<keyword id="KW-1185">Reference proteome</keyword>
<keyword id="KW-0698">rRNA processing</keyword>
<keyword id="KW-0949">S-adenosyl-L-methionine</keyword>
<keyword id="KW-0808">Transferase</keyword>
<dbReference type="EC" id="2.1.1.199" evidence="1"/>
<dbReference type="EMBL" id="CP000513">
    <property type="protein sequence ID" value="ABQ13309.1"/>
    <property type="molecule type" value="Genomic_DNA"/>
</dbReference>
<dbReference type="RefSeq" id="WP_012031302.1">
    <property type="nucleotide sequence ID" value="NC_009446.1"/>
</dbReference>
<dbReference type="SMR" id="A5EY11"/>
<dbReference type="STRING" id="246195.DNO_0989"/>
<dbReference type="KEGG" id="dno:DNO_0989"/>
<dbReference type="eggNOG" id="COG0275">
    <property type="taxonomic scope" value="Bacteria"/>
</dbReference>
<dbReference type="HOGENOM" id="CLU_038422_2_0_6"/>
<dbReference type="OrthoDB" id="9806637at2"/>
<dbReference type="Proteomes" id="UP000000248">
    <property type="component" value="Chromosome"/>
</dbReference>
<dbReference type="GO" id="GO:0005737">
    <property type="term" value="C:cytoplasm"/>
    <property type="evidence" value="ECO:0007669"/>
    <property type="project" value="UniProtKB-SubCell"/>
</dbReference>
<dbReference type="GO" id="GO:0071424">
    <property type="term" value="F:rRNA (cytosine-N4-)-methyltransferase activity"/>
    <property type="evidence" value="ECO:0007669"/>
    <property type="project" value="UniProtKB-UniRule"/>
</dbReference>
<dbReference type="GO" id="GO:0070475">
    <property type="term" value="P:rRNA base methylation"/>
    <property type="evidence" value="ECO:0007669"/>
    <property type="project" value="UniProtKB-UniRule"/>
</dbReference>
<dbReference type="Gene3D" id="1.10.150.170">
    <property type="entry name" value="Putative methyltransferase TM0872, insert domain"/>
    <property type="match status" value="1"/>
</dbReference>
<dbReference type="Gene3D" id="3.40.50.150">
    <property type="entry name" value="Vaccinia Virus protein VP39"/>
    <property type="match status" value="1"/>
</dbReference>
<dbReference type="HAMAP" id="MF_01007">
    <property type="entry name" value="16SrRNA_methyltr_H"/>
    <property type="match status" value="1"/>
</dbReference>
<dbReference type="InterPro" id="IPR002903">
    <property type="entry name" value="RsmH"/>
</dbReference>
<dbReference type="InterPro" id="IPR023397">
    <property type="entry name" value="SAM-dep_MeTrfase_MraW_recog"/>
</dbReference>
<dbReference type="InterPro" id="IPR029063">
    <property type="entry name" value="SAM-dependent_MTases_sf"/>
</dbReference>
<dbReference type="NCBIfam" id="TIGR00006">
    <property type="entry name" value="16S rRNA (cytosine(1402)-N(4))-methyltransferase RsmH"/>
    <property type="match status" value="1"/>
</dbReference>
<dbReference type="PANTHER" id="PTHR11265:SF0">
    <property type="entry name" value="12S RRNA N4-METHYLCYTIDINE METHYLTRANSFERASE"/>
    <property type="match status" value="1"/>
</dbReference>
<dbReference type="PANTHER" id="PTHR11265">
    <property type="entry name" value="S-ADENOSYL-METHYLTRANSFERASE MRAW"/>
    <property type="match status" value="1"/>
</dbReference>
<dbReference type="Pfam" id="PF01795">
    <property type="entry name" value="Methyltransf_5"/>
    <property type="match status" value="1"/>
</dbReference>
<dbReference type="PIRSF" id="PIRSF004486">
    <property type="entry name" value="MraW"/>
    <property type="match status" value="1"/>
</dbReference>
<dbReference type="SUPFAM" id="SSF81799">
    <property type="entry name" value="Putative methyltransferase TM0872, insert domain"/>
    <property type="match status" value="1"/>
</dbReference>
<dbReference type="SUPFAM" id="SSF53335">
    <property type="entry name" value="S-adenosyl-L-methionine-dependent methyltransferases"/>
    <property type="match status" value="1"/>
</dbReference>
<organism>
    <name type="scientific">Dichelobacter nodosus (strain VCS1703A)</name>
    <dbReference type="NCBI Taxonomy" id="246195"/>
    <lineage>
        <taxon>Bacteria</taxon>
        <taxon>Pseudomonadati</taxon>
        <taxon>Pseudomonadota</taxon>
        <taxon>Gammaproteobacteria</taxon>
        <taxon>Cardiobacteriales</taxon>
        <taxon>Cardiobacteriaceae</taxon>
        <taxon>Dichelobacter</taxon>
    </lineage>
</organism>
<name>RSMH_DICNV</name>
<reference key="1">
    <citation type="journal article" date="2007" name="Nat. Biotechnol.">
        <title>Genome sequence and identification of candidate vaccine antigens from the animal pathogen Dichelobacter nodosus.</title>
        <authorList>
            <person name="Myers G.S.A."/>
            <person name="Parker D."/>
            <person name="Al-Hasani K."/>
            <person name="Kennan R.M."/>
            <person name="Seemann T."/>
            <person name="Ren Q."/>
            <person name="Badger J.H."/>
            <person name="Selengut J.D."/>
            <person name="Deboy R.T."/>
            <person name="Tettelin H."/>
            <person name="Boyce J.D."/>
            <person name="McCarl V.P."/>
            <person name="Han X."/>
            <person name="Nelson W.C."/>
            <person name="Madupu R."/>
            <person name="Mohamoud Y."/>
            <person name="Holley T."/>
            <person name="Fedorova N."/>
            <person name="Khouri H."/>
            <person name="Bottomley S.P."/>
            <person name="Whittington R.J."/>
            <person name="Adler B."/>
            <person name="Songer J.G."/>
            <person name="Rood J.I."/>
            <person name="Paulsen I.T."/>
        </authorList>
    </citation>
    <scope>NUCLEOTIDE SEQUENCE [LARGE SCALE GENOMIC DNA]</scope>
    <source>
        <strain>VCS1703A</strain>
    </source>
</reference>
<gene>
    <name evidence="1" type="primary">rsmH</name>
    <name type="synonym">mraW</name>
    <name type="ordered locus">DNO_0989</name>
</gene>
<protein>
    <recommendedName>
        <fullName evidence="1">Ribosomal RNA small subunit methyltransferase H</fullName>
        <ecNumber evidence="1">2.1.1.199</ecNumber>
    </recommendedName>
    <alternativeName>
        <fullName evidence="1">16S rRNA m(4)C1402 methyltransferase</fullName>
    </alternativeName>
    <alternativeName>
        <fullName evidence="1">rRNA (cytosine-N(4)-)-methyltransferase RsmH</fullName>
    </alternativeName>
</protein>
<evidence type="ECO:0000255" key="1">
    <source>
        <dbReference type="HAMAP-Rule" id="MF_01007"/>
    </source>
</evidence>
<sequence>METSEHIPVLLAEAVAALEIAPNGRYLDATFGRGGHSSEILAQLGESGQLYALDRDQQAAAVAAQITDPRFHFARCAFSEMETAFAALGAESLDGILFDLGVSSPQLDDPSRGFSFAKEGPLDMRMDNEQNLTAQKWLKNVDEDTLTTVIRDYGGEPHTVAKRIAKAILAAKNDLKSTLDLASVVAQARPKKLYKPHLHPATQTFQAIRIAVNDEIGEIQRALRAATMMLKSGGILVVISFHGLEDATVKRFVRSMEGEPLPAEIPATNTTNIHQVLRLVPPVIKPSSAEIAQNPRSRSAKLRKAVKL</sequence>
<proteinExistence type="inferred from homology"/>
<accession>A5EY11</accession>
<feature type="chain" id="PRO_1000062825" description="Ribosomal RNA small subunit methyltransferase H">
    <location>
        <begin position="1"/>
        <end position="308"/>
    </location>
</feature>
<feature type="binding site" evidence="1">
    <location>
        <begin position="34"/>
        <end position="36"/>
    </location>
    <ligand>
        <name>S-adenosyl-L-methionine</name>
        <dbReference type="ChEBI" id="CHEBI:59789"/>
    </ligand>
</feature>
<feature type="binding site" evidence="1">
    <location>
        <position position="54"/>
    </location>
    <ligand>
        <name>S-adenosyl-L-methionine</name>
        <dbReference type="ChEBI" id="CHEBI:59789"/>
    </ligand>
</feature>
<feature type="binding site" evidence="1">
    <location>
        <position position="85"/>
    </location>
    <ligand>
        <name>S-adenosyl-L-methionine</name>
        <dbReference type="ChEBI" id="CHEBI:59789"/>
    </ligand>
</feature>
<feature type="binding site" evidence="1">
    <location>
        <position position="99"/>
    </location>
    <ligand>
        <name>S-adenosyl-L-methionine</name>
        <dbReference type="ChEBI" id="CHEBI:59789"/>
    </ligand>
</feature>
<feature type="binding site" evidence="1">
    <location>
        <position position="106"/>
    </location>
    <ligand>
        <name>S-adenosyl-L-methionine</name>
        <dbReference type="ChEBI" id="CHEBI:59789"/>
    </ligand>
</feature>